<proteinExistence type="inferred from homology"/>
<organismHost>
    <name type="scientific">Homo sapiens</name>
    <name type="common">Human</name>
    <dbReference type="NCBI Taxonomy" id="9606"/>
</organismHost>
<gene>
    <name type="primary">OPG099</name>
    <name type="ORF">L1R</name>
</gene>
<reference key="1">
    <citation type="journal article" date="1993" name="Nature">
        <title>Potential virulence determinants in terminal regions of variola smallpox virus genome.</title>
        <authorList>
            <person name="Massung R.F."/>
            <person name="Esposito J.J."/>
            <person name="Liu L.I."/>
            <person name="Qi J."/>
            <person name="Utterback T.R."/>
            <person name="Knight J.C."/>
            <person name="Aubin L."/>
            <person name="Yuran T.E."/>
            <person name="Parsons J.M."/>
            <person name="Loparev V.N."/>
            <person name="Selivanov N.A."/>
            <person name="Cavallaro K.F."/>
            <person name="Kerlavage A.R."/>
            <person name="Mahy B.W.J."/>
            <person name="Venter J.C."/>
        </authorList>
    </citation>
    <scope>NUCLEOTIDE SEQUENCE [GENOMIC DNA]</scope>
    <source>
        <strain>Bangladesh-1975</strain>
    </source>
</reference>
<feature type="initiator methionine" description="Removed; by host" evidence="1">
    <location>
        <position position="1"/>
    </location>
</feature>
<feature type="chain" id="PRO_0000448204" description="Entry-fusion complex associated protein OPG095">
    <location>
        <begin position="2"/>
        <end position="250"/>
    </location>
</feature>
<feature type="topological domain" description="Virion surface" evidence="2">
    <location>
        <begin position="2"/>
        <end position="183"/>
    </location>
</feature>
<feature type="transmembrane region" description="Helical" evidence="2">
    <location>
        <begin position="184"/>
        <end position="204"/>
    </location>
</feature>
<feature type="topological domain" description="Intravirion" evidence="2">
    <location>
        <begin position="205"/>
        <end position="250"/>
    </location>
</feature>
<feature type="region of interest" description="Targeting to MV membrane" evidence="1">
    <location>
        <begin position="2"/>
        <end position="12"/>
    </location>
</feature>
<feature type="lipid moiety-binding region" description="N-myristoyl glycine; by host" evidence="1">
    <location>
        <position position="2"/>
    </location>
</feature>
<feature type="disulfide bond" description="by OPG088" evidence="1">
    <location>
        <begin position="34"/>
        <end position="57"/>
    </location>
</feature>
<feature type="disulfide bond" description="by OPG088" evidence="1">
    <location>
        <begin position="49"/>
        <end position="136"/>
    </location>
</feature>
<feature type="disulfide bond" description="by OPG088" evidence="1">
    <location>
        <begin position="116"/>
        <end position="158"/>
    </location>
</feature>
<name>PG095_VARV</name>
<keyword id="KW-1015">Disulfide bond</keyword>
<keyword id="KW-0945">Host-virus interaction</keyword>
<keyword id="KW-0426">Late protein</keyword>
<keyword id="KW-0449">Lipoprotein</keyword>
<keyword id="KW-0472">Membrane</keyword>
<keyword id="KW-0519">Myristate</keyword>
<keyword id="KW-0812">Transmembrane</keyword>
<keyword id="KW-1133">Transmembrane helix</keyword>
<keyword id="KW-1161">Viral attachment to host cell</keyword>
<keyword id="KW-0261">Viral envelope protein</keyword>
<keyword id="KW-1162">Viral penetration into host cytoplasm</keyword>
<keyword id="KW-0946">Virion</keyword>
<keyword id="KW-1160">Virus entry into host cell</keyword>
<protein>
    <recommendedName>
        <fullName>Entry-fusion complex associated protein OPG095</fullName>
    </recommendedName>
    <alternativeName>
        <fullName>EFC-associated protein OPG095</fullName>
    </alternativeName>
    <alternativeName>
        <fullName>Protein L1</fullName>
    </alternativeName>
    <alternativeName>
        <fullName>Virion membrane protein M25</fullName>
    </alternativeName>
</protein>
<comment type="function">
    <text evidence="1">Component of the entry fusion complex (EFC), which consists of 11 proteins. During cell infection, this complex mediates entry of the virion core into the host cytoplasm by a two-step mechanism consisting of lipid mixing of the viral and cellular membranes and subsequent pore formation.</text>
</comment>
<comment type="subunit">
    <text evidence="1">Component of the entry fusion complex (EFC) composed of OPG053, OPG076, OPG086, OPG094, OPG095, OPG099, OPG107, OPG143, OPG104, OPG147 and OPG155. Except for OPG095 and OPG053, each of the EFC proteins is required for assembly or stability of the complex.</text>
</comment>
<comment type="subcellular location">
    <subcellularLocation>
        <location evidence="1">Virion membrane</location>
        <topology evidence="1">Single-pass membrane protein</topology>
    </subcellularLocation>
    <text evidence="1">Localizes to the membrane surrounding the core of mature virus particles (MV).</text>
</comment>
<comment type="induction">
    <text evidence="1">Expressed in the late phase of the viral replicative cycle.</text>
</comment>
<comment type="PTM">
    <text evidence="1">Myristoylated.</text>
</comment>
<comment type="PTM">
    <text evidence="1">Disulfid bonds are oxidized in the cytoplasm by OPG088 protein.</text>
</comment>
<comment type="PTM">
    <text evidence="1">Unglycosylated because produced in viral factories instead of the classic ER -Golgi route.</text>
</comment>
<comment type="similarity">
    <text evidence="3">Belongs to the orthopoxvirus OPG095 family.</text>
</comment>
<sequence length="250" mass="27289">MGAAASIQTTVNTLSERISSKLEQEANASAQTKCDIEIGNFYIRQNHGCNLTVKNMCSADADAQLDAVLSAATETYSGLTPEQKAYVPAMFTAALNIQTSVNTVVRDFENYVKQTCNSSAVVDNKLKIQNVIIDECYGAPGSPTNLEFINTGSSKGNCAIKALMQLTTKATTQIAPRQVAGTGVQFYMIVIGVIILAALFMYYAKRMLFTSTNDKIKLILANKENVHWTTYMDTFFRTSPMVIATTDIQN</sequence>
<organism>
    <name type="scientific">Variola virus</name>
    <dbReference type="NCBI Taxonomy" id="10255"/>
    <lineage>
        <taxon>Viruses</taxon>
        <taxon>Varidnaviria</taxon>
        <taxon>Bamfordvirae</taxon>
        <taxon>Nucleocytoviricota</taxon>
        <taxon>Pokkesviricetes</taxon>
        <taxon>Chitovirales</taxon>
        <taxon>Poxviridae</taxon>
        <taxon>Chordopoxvirinae</taxon>
        <taxon>Orthopoxvirus</taxon>
    </lineage>
</organism>
<evidence type="ECO:0000250" key="1">
    <source>
        <dbReference type="UniProtKB" id="P07612"/>
    </source>
</evidence>
<evidence type="ECO:0000255" key="2"/>
<evidence type="ECO:0000305" key="3"/>
<accession>P0DOT8</accession>
<accession>P33040</accession>
<dbReference type="EMBL" id="L22579">
    <property type="protein sequence ID" value="AAA60821.1"/>
    <property type="molecule type" value="Genomic_DNA"/>
</dbReference>
<dbReference type="PIR" id="T28511">
    <property type="entry name" value="T28511"/>
</dbReference>
<dbReference type="SMR" id="P0DOT8"/>
<dbReference type="KEGG" id="vg:1486470"/>
<dbReference type="Proteomes" id="UP000119805">
    <property type="component" value="Segment"/>
</dbReference>
<dbReference type="GO" id="GO:0016020">
    <property type="term" value="C:membrane"/>
    <property type="evidence" value="ECO:0007669"/>
    <property type="project" value="UniProtKB-KW"/>
</dbReference>
<dbReference type="GO" id="GO:0019031">
    <property type="term" value="C:viral envelope"/>
    <property type="evidence" value="ECO:0007669"/>
    <property type="project" value="UniProtKB-KW"/>
</dbReference>
<dbReference type="GO" id="GO:0055036">
    <property type="term" value="C:virion membrane"/>
    <property type="evidence" value="ECO:0007669"/>
    <property type="project" value="UniProtKB-SubCell"/>
</dbReference>
<dbReference type="GO" id="GO:0046718">
    <property type="term" value="P:symbiont entry into host cell"/>
    <property type="evidence" value="ECO:0007669"/>
    <property type="project" value="UniProtKB-KW"/>
</dbReference>
<dbReference type="GO" id="GO:0019062">
    <property type="term" value="P:virion attachment to host cell"/>
    <property type="evidence" value="ECO:0007669"/>
    <property type="project" value="UniProtKB-KW"/>
</dbReference>
<dbReference type="InterPro" id="IPR003472">
    <property type="entry name" value="Virion_mem_poxvirus_L1"/>
</dbReference>
<dbReference type="Pfam" id="PF02442">
    <property type="entry name" value="L1R_F9L"/>
    <property type="match status" value="1"/>
</dbReference>